<organism>
    <name type="scientific">Rhizobium meliloti (strain 1021)</name>
    <name type="common">Ensifer meliloti</name>
    <name type="synonym">Sinorhizobium meliloti</name>
    <dbReference type="NCBI Taxonomy" id="266834"/>
    <lineage>
        <taxon>Bacteria</taxon>
        <taxon>Pseudomonadati</taxon>
        <taxon>Pseudomonadota</taxon>
        <taxon>Alphaproteobacteria</taxon>
        <taxon>Hyphomicrobiales</taxon>
        <taxon>Rhizobiaceae</taxon>
        <taxon>Sinorhizobium/Ensifer group</taxon>
        <taxon>Sinorhizobium</taxon>
    </lineage>
</organism>
<feature type="chain" id="PRO_0000218086" description="Trans-aconitate 2-methyltransferase">
    <location>
        <begin position="1"/>
        <end position="257"/>
    </location>
</feature>
<accession>Q92RC5</accession>
<sequence>MSWSAAQYAKFEDERTRPARDLLAQVPDLPAGPAFDLGCGPGNSTELILARFPGSPLTGIDSDDDMLSAARTRLPDLRFERGDLAAWTPPAESALFFANAVFQWLPEHVTLFERLILALAPGGTLAVQMPDNLDEPTHLLMEETAEESAFAPAFAGRTIRRRSLPSPATYVERLASKEVRVDVWHTVYYHQLANANAIVEWVKGTGLRPYLDALPTTQRAGYLAAYAEKIRKAYPAMKNGRVLLRFPRLFIVATRNL</sequence>
<keyword id="KW-0963">Cytoplasm</keyword>
<keyword id="KW-0489">Methyltransferase</keyword>
<keyword id="KW-1185">Reference proteome</keyword>
<keyword id="KW-0949">S-adenosyl-L-methionine</keyword>
<keyword id="KW-0808">Transferase</keyword>
<name>TAM_RHIME</name>
<comment type="function">
    <text evidence="1">Catalyzes the S-adenosylmethionine monomethyl esterification of trans-aconitate.</text>
</comment>
<comment type="catalytic activity">
    <reaction evidence="1">
        <text>trans-aconitate + S-adenosyl-L-methionine = (E)-3-(methoxycarbonyl)pent-2-enedioate + S-adenosyl-L-homocysteine</text>
        <dbReference type="Rhea" id="RHEA:14969"/>
        <dbReference type="ChEBI" id="CHEBI:15708"/>
        <dbReference type="ChEBI" id="CHEBI:57470"/>
        <dbReference type="ChEBI" id="CHEBI:57856"/>
        <dbReference type="ChEBI" id="CHEBI:59789"/>
        <dbReference type="EC" id="2.1.1.144"/>
    </reaction>
</comment>
<comment type="subcellular location">
    <subcellularLocation>
        <location evidence="1">Cytoplasm</location>
    </subcellularLocation>
</comment>
<comment type="similarity">
    <text evidence="1">Belongs to the methyltransferase superfamily. Tam family.</text>
</comment>
<proteinExistence type="inferred from homology"/>
<protein>
    <recommendedName>
        <fullName evidence="1">Trans-aconitate 2-methyltransferase</fullName>
        <ecNumber evidence="1">2.1.1.144</ecNumber>
    </recommendedName>
</protein>
<reference key="1">
    <citation type="journal article" date="2001" name="Proc. Natl. Acad. Sci. U.S.A.">
        <title>Analysis of the chromosome sequence of the legume symbiont Sinorhizobium meliloti strain 1021.</title>
        <authorList>
            <person name="Capela D."/>
            <person name="Barloy-Hubler F."/>
            <person name="Gouzy J."/>
            <person name="Bothe G."/>
            <person name="Ampe F."/>
            <person name="Batut J."/>
            <person name="Boistard P."/>
            <person name="Becker A."/>
            <person name="Boutry M."/>
            <person name="Cadieu E."/>
            <person name="Dreano S."/>
            <person name="Gloux S."/>
            <person name="Godrie T."/>
            <person name="Goffeau A."/>
            <person name="Kahn D."/>
            <person name="Kiss E."/>
            <person name="Lelaure V."/>
            <person name="Masuy D."/>
            <person name="Pohl T."/>
            <person name="Portetelle D."/>
            <person name="Puehler A."/>
            <person name="Purnelle B."/>
            <person name="Ramsperger U."/>
            <person name="Renard C."/>
            <person name="Thebault P."/>
            <person name="Vandenbol M."/>
            <person name="Weidner S."/>
            <person name="Galibert F."/>
        </authorList>
    </citation>
    <scope>NUCLEOTIDE SEQUENCE [LARGE SCALE GENOMIC DNA]</scope>
    <source>
        <strain>1021</strain>
    </source>
</reference>
<reference key="2">
    <citation type="journal article" date="2001" name="Science">
        <title>The composite genome of the legume symbiont Sinorhizobium meliloti.</title>
        <authorList>
            <person name="Galibert F."/>
            <person name="Finan T.M."/>
            <person name="Long S.R."/>
            <person name="Puehler A."/>
            <person name="Abola P."/>
            <person name="Ampe F."/>
            <person name="Barloy-Hubler F."/>
            <person name="Barnett M.J."/>
            <person name="Becker A."/>
            <person name="Boistard P."/>
            <person name="Bothe G."/>
            <person name="Boutry M."/>
            <person name="Bowser L."/>
            <person name="Buhrmester J."/>
            <person name="Cadieu E."/>
            <person name="Capela D."/>
            <person name="Chain P."/>
            <person name="Cowie A."/>
            <person name="Davis R.W."/>
            <person name="Dreano S."/>
            <person name="Federspiel N.A."/>
            <person name="Fisher R.F."/>
            <person name="Gloux S."/>
            <person name="Godrie T."/>
            <person name="Goffeau A."/>
            <person name="Golding B."/>
            <person name="Gouzy J."/>
            <person name="Gurjal M."/>
            <person name="Hernandez-Lucas I."/>
            <person name="Hong A."/>
            <person name="Huizar L."/>
            <person name="Hyman R.W."/>
            <person name="Jones T."/>
            <person name="Kahn D."/>
            <person name="Kahn M.L."/>
            <person name="Kalman S."/>
            <person name="Keating D.H."/>
            <person name="Kiss E."/>
            <person name="Komp C."/>
            <person name="Lelaure V."/>
            <person name="Masuy D."/>
            <person name="Palm C."/>
            <person name="Peck M.C."/>
            <person name="Pohl T.M."/>
            <person name="Portetelle D."/>
            <person name="Purnelle B."/>
            <person name="Ramsperger U."/>
            <person name="Surzycki R."/>
            <person name="Thebault P."/>
            <person name="Vandenbol M."/>
            <person name="Vorhoelter F.J."/>
            <person name="Weidner S."/>
            <person name="Wells D.H."/>
            <person name="Wong K."/>
            <person name="Yeh K.-C."/>
            <person name="Batut J."/>
        </authorList>
    </citation>
    <scope>NUCLEOTIDE SEQUENCE [LARGE SCALE GENOMIC DNA]</scope>
    <source>
        <strain>1021</strain>
    </source>
</reference>
<dbReference type="EC" id="2.1.1.144" evidence="1"/>
<dbReference type="EMBL" id="AL591688">
    <property type="protein sequence ID" value="CAC45539.1"/>
    <property type="molecule type" value="Genomic_DNA"/>
</dbReference>
<dbReference type="RefSeq" id="NP_385073.1">
    <property type="nucleotide sequence ID" value="NC_003047.1"/>
</dbReference>
<dbReference type="RefSeq" id="WP_003537253.1">
    <property type="nucleotide sequence ID" value="NC_003047.1"/>
</dbReference>
<dbReference type="SMR" id="Q92RC5"/>
<dbReference type="EnsemblBacteria" id="CAC45539">
    <property type="protein sequence ID" value="CAC45539"/>
    <property type="gene ID" value="SMc00225"/>
</dbReference>
<dbReference type="KEGG" id="sme:SMc00225"/>
<dbReference type="PATRIC" id="fig|266834.11.peg.2367"/>
<dbReference type="eggNOG" id="COG4106">
    <property type="taxonomic scope" value="Bacteria"/>
</dbReference>
<dbReference type="HOGENOM" id="CLU_037990_5_2_5"/>
<dbReference type="OrthoDB" id="9795085at2"/>
<dbReference type="Proteomes" id="UP000001976">
    <property type="component" value="Chromosome"/>
</dbReference>
<dbReference type="GO" id="GO:0005737">
    <property type="term" value="C:cytoplasm"/>
    <property type="evidence" value="ECO:0007669"/>
    <property type="project" value="UniProtKB-SubCell"/>
</dbReference>
<dbReference type="GO" id="GO:0030798">
    <property type="term" value="F:trans-aconitate 2-methyltransferase activity"/>
    <property type="evidence" value="ECO:0007669"/>
    <property type="project" value="UniProtKB-UniRule"/>
</dbReference>
<dbReference type="GO" id="GO:0032259">
    <property type="term" value="P:methylation"/>
    <property type="evidence" value="ECO:0007669"/>
    <property type="project" value="UniProtKB-KW"/>
</dbReference>
<dbReference type="CDD" id="cd02440">
    <property type="entry name" value="AdoMet_MTases"/>
    <property type="match status" value="1"/>
</dbReference>
<dbReference type="Gene3D" id="1.10.150.290">
    <property type="entry name" value="S-adenosyl-L-methionine-dependent methyltransferases"/>
    <property type="match status" value="1"/>
</dbReference>
<dbReference type="Gene3D" id="3.40.50.150">
    <property type="entry name" value="Vaccinia Virus protein VP39"/>
    <property type="match status" value="1"/>
</dbReference>
<dbReference type="HAMAP" id="MF_00560">
    <property type="entry name" value="Tran_acon_Me_trans"/>
    <property type="match status" value="1"/>
</dbReference>
<dbReference type="InterPro" id="IPR041698">
    <property type="entry name" value="Methyltransf_25"/>
</dbReference>
<dbReference type="InterPro" id="IPR029063">
    <property type="entry name" value="SAM-dependent_MTases_sf"/>
</dbReference>
<dbReference type="InterPro" id="IPR023506">
    <property type="entry name" value="Trans-aconitate_MeTrfase"/>
</dbReference>
<dbReference type="InterPro" id="IPR023149">
    <property type="entry name" value="Trans_acon_MeTrfase_C"/>
</dbReference>
<dbReference type="NCBIfam" id="NF002463">
    <property type="entry name" value="PRK01683.1"/>
    <property type="match status" value="1"/>
</dbReference>
<dbReference type="PANTHER" id="PTHR43861:SF1">
    <property type="entry name" value="TRANS-ACONITATE 2-METHYLTRANSFERASE"/>
    <property type="match status" value="1"/>
</dbReference>
<dbReference type="PANTHER" id="PTHR43861">
    <property type="entry name" value="TRANS-ACONITATE 2-METHYLTRANSFERASE-RELATED"/>
    <property type="match status" value="1"/>
</dbReference>
<dbReference type="Pfam" id="PF13649">
    <property type="entry name" value="Methyltransf_25"/>
    <property type="match status" value="1"/>
</dbReference>
<dbReference type="SUPFAM" id="SSF53335">
    <property type="entry name" value="S-adenosyl-L-methionine-dependent methyltransferases"/>
    <property type="match status" value="1"/>
</dbReference>
<evidence type="ECO:0000255" key="1">
    <source>
        <dbReference type="HAMAP-Rule" id="MF_00560"/>
    </source>
</evidence>
<gene>
    <name evidence="1" type="primary">tam</name>
    <name type="ordered locus">R00967</name>
    <name type="ORF">SMc00225</name>
</gene>